<accession>Q8FJ93</accession>
<organism>
    <name type="scientific">Escherichia coli O6:H1 (strain CFT073 / ATCC 700928 / UPEC)</name>
    <dbReference type="NCBI Taxonomy" id="199310"/>
    <lineage>
        <taxon>Bacteria</taxon>
        <taxon>Pseudomonadati</taxon>
        <taxon>Pseudomonadota</taxon>
        <taxon>Gammaproteobacteria</taxon>
        <taxon>Enterobacterales</taxon>
        <taxon>Enterobacteriaceae</taxon>
        <taxon>Escherichia</taxon>
    </lineage>
</organism>
<feature type="initiator methionine" description="Removed" evidence="1">
    <location>
        <position position="1"/>
    </location>
</feature>
<feature type="chain" id="PRO_0000216707" description="Alkanesulfonate monooxygenase">
    <location>
        <begin position="2"/>
        <end position="381"/>
    </location>
</feature>
<proteinExistence type="inferred from homology"/>
<gene>
    <name evidence="2" type="primary">ssuD</name>
    <name type="synonym">ycbN</name>
    <name type="ordered locus">c1078</name>
</gene>
<protein>
    <recommendedName>
        <fullName evidence="2">Alkanesulfonate monooxygenase</fullName>
        <ecNumber evidence="2">1.14.14.5</ecNumber>
    </recommendedName>
    <alternativeName>
        <fullName evidence="2">FMNH2-dependent aliphatic sulfonate monooxygenase</fullName>
    </alternativeName>
</protein>
<reference key="1">
    <citation type="journal article" date="2002" name="Proc. Natl. Acad. Sci. U.S.A.">
        <title>Extensive mosaic structure revealed by the complete genome sequence of uropathogenic Escherichia coli.</title>
        <authorList>
            <person name="Welch R.A."/>
            <person name="Burland V."/>
            <person name="Plunkett G. III"/>
            <person name="Redford P."/>
            <person name="Roesch P."/>
            <person name="Rasko D."/>
            <person name="Buckles E.L."/>
            <person name="Liou S.-R."/>
            <person name="Boutin A."/>
            <person name="Hackett J."/>
            <person name="Stroud D."/>
            <person name="Mayhew G.F."/>
            <person name="Rose D.J."/>
            <person name="Zhou S."/>
            <person name="Schwartz D.C."/>
            <person name="Perna N.T."/>
            <person name="Mobley H.L.T."/>
            <person name="Donnenberg M.S."/>
            <person name="Blattner F.R."/>
        </authorList>
    </citation>
    <scope>NUCLEOTIDE SEQUENCE [LARGE SCALE GENOMIC DNA]</scope>
    <source>
        <strain>CFT073 / ATCC 700928 / UPEC</strain>
    </source>
</reference>
<comment type="function">
    <text evidence="2">Catalyzes the desulfonation of aliphatic sulfonates.</text>
</comment>
<comment type="catalytic activity">
    <reaction evidence="2">
        <text>an alkanesulfonate + FMNH2 + O2 = an aldehyde + FMN + sulfite + H2O + 2 H(+)</text>
        <dbReference type="Rhea" id="RHEA:23064"/>
        <dbReference type="ChEBI" id="CHEBI:15377"/>
        <dbReference type="ChEBI" id="CHEBI:15378"/>
        <dbReference type="ChEBI" id="CHEBI:15379"/>
        <dbReference type="ChEBI" id="CHEBI:17359"/>
        <dbReference type="ChEBI" id="CHEBI:17478"/>
        <dbReference type="ChEBI" id="CHEBI:57618"/>
        <dbReference type="ChEBI" id="CHEBI:58210"/>
        <dbReference type="ChEBI" id="CHEBI:134249"/>
        <dbReference type="EC" id="1.14.14.5"/>
    </reaction>
</comment>
<comment type="subunit">
    <text evidence="2">Homotetramer.</text>
</comment>
<comment type="miscellaneous">
    <text evidence="2">FMNH(2) which is absolutely required for this enzymatic reaction, is provided by SsuE.</text>
</comment>
<comment type="similarity">
    <text evidence="2">Belongs to the SsuD family.</text>
</comment>
<evidence type="ECO:0000250" key="1"/>
<evidence type="ECO:0000255" key="2">
    <source>
        <dbReference type="HAMAP-Rule" id="MF_01229"/>
    </source>
</evidence>
<keyword id="KW-0285">Flavoprotein</keyword>
<keyword id="KW-0288">FMN</keyword>
<keyword id="KW-0503">Monooxygenase</keyword>
<keyword id="KW-0560">Oxidoreductase</keyword>
<keyword id="KW-1185">Reference proteome</keyword>
<sequence>MSLNMFWFLPTHGDGHYLGTEEGSRPIDHGYLQQIAQAADRLGYTGVLIPTGRSCEDAWLVAASMIPVTQRLKFLVALRPSVTSPTVAARQAATLDRLSNGRALFNLVTGSDPQELAGDGVFLDHSERYEASAEFTQVWRRLLLGETVDFNGKHIHVRGAKLLFPPIQQPYPPLYFGGSSDVAQELAAEQVDLYLTWGEPPELVKEKIEHVRAKAAAHGRKIRFGVRLHVIVRETNDEAWQAAERLISRLDDETIAKAQAAFARTDSVGQQRMAALHNGKRDNLEISPNLWAGVGLVRGGAGTALVGDGPTVAARINEYAALGIDSFVLSGYPHLEEAYRVGELLFPHLDVAIPEIPQPQPLNPQGEAVANDFIPRNVAQS</sequence>
<dbReference type="EC" id="1.14.14.5" evidence="2"/>
<dbReference type="EMBL" id="AE014075">
    <property type="protein sequence ID" value="AAN79546.1"/>
    <property type="molecule type" value="Genomic_DNA"/>
</dbReference>
<dbReference type="RefSeq" id="WP_000055951.1">
    <property type="nucleotide sequence ID" value="NC_004431.1"/>
</dbReference>
<dbReference type="SMR" id="Q8FJ93"/>
<dbReference type="STRING" id="199310.c1078"/>
<dbReference type="KEGG" id="ecc:c1078"/>
<dbReference type="eggNOG" id="COG2141">
    <property type="taxonomic scope" value="Bacteria"/>
</dbReference>
<dbReference type="HOGENOM" id="CLU_027853_1_0_6"/>
<dbReference type="BioCyc" id="ECOL199310:C1078-MONOMER"/>
<dbReference type="Proteomes" id="UP000001410">
    <property type="component" value="Chromosome"/>
</dbReference>
<dbReference type="GO" id="GO:0008726">
    <property type="term" value="F:alkanesulfonate monooxygenase activity"/>
    <property type="evidence" value="ECO:0007669"/>
    <property type="project" value="UniProtKB-UniRule"/>
</dbReference>
<dbReference type="GO" id="GO:0046306">
    <property type="term" value="P:alkanesulfonate catabolic process"/>
    <property type="evidence" value="ECO:0007669"/>
    <property type="project" value="TreeGrafter"/>
</dbReference>
<dbReference type="CDD" id="cd01094">
    <property type="entry name" value="Alkanesulfonate_monoxygenase"/>
    <property type="match status" value="1"/>
</dbReference>
<dbReference type="FunFam" id="3.20.20.30:FF:000001">
    <property type="entry name" value="Alkanesulfonate monooxygenase"/>
    <property type="match status" value="1"/>
</dbReference>
<dbReference type="Gene3D" id="3.20.20.30">
    <property type="entry name" value="Luciferase-like domain"/>
    <property type="match status" value="1"/>
</dbReference>
<dbReference type="HAMAP" id="MF_01229">
    <property type="entry name" value="Alkanesulf_monooxygen"/>
    <property type="match status" value="1"/>
</dbReference>
<dbReference type="InterPro" id="IPR019911">
    <property type="entry name" value="Alkanesulphonate_mOase_FMN-dep"/>
</dbReference>
<dbReference type="InterPro" id="IPR011251">
    <property type="entry name" value="Luciferase-like_dom"/>
</dbReference>
<dbReference type="InterPro" id="IPR036661">
    <property type="entry name" value="Luciferase-like_sf"/>
</dbReference>
<dbReference type="InterPro" id="IPR050172">
    <property type="entry name" value="SsuD_RutA_monooxygenase"/>
</dbReference>
<dbReference type="NCBIfam" id="TIGR03565">
    <property type="entry name" value="alk_sulf_monoox"/>
    <property type="match status" value="1"/>
</dbReference>
<dbReference type="NCBIfam" id="NF001939">
    <property type="entry name" value="PRK00719.1"/>
    <property type="match status" value="1"/>
</dbReference>
<dbReference type="PANTHER" id="PTHR42847">
    <property type="entry name" value="ALKANESULFONATE MONOOXYGENASE"/>
    <property type="match status" value="1"/>
</dbReference>
<dbReference type="PANTHER" id="PTHR42847:SF4">
    <property type="entry name" value="ALKANESULFONATE MONOOXYGENASE-RELATED"/>
    <property type="match status" value="1"/>
</dbReference>
<dbReference type="Pfam" id="PF00296">
    <property type="entry name" value="Bac_luciferase"/>
    <property type="match status" value="1"/>
</dbReference>
<dbReference type="SUPFAM" id="SSF51679">
    <property type="entry name" value="Bacterial luciferase-like"/>
    <property type="match status" value="1"/>
</dbReference>
<name>SSUD_ECOL6</name>